<feature type="chain" id="PRO_1000059532" description="Chaperone protein DnaK">
    <location>
        <begin position="1"/>
        <end position="623"/>
    </location>
</feature>
<feature type="region of interest" description="Disordered" evidence="2">
    <location>
        <begin position="595"/>
        <end position="623"/>
    </location>
</feature>
<feature type="compositionally biased region" description="Basic and acidic residues" evidence="2">
    <location>
        <begin position="595"/>
        <end position="615"/>
    </location>
</feature>
<feature type="modified residue" description="Phosphothreonine; by autocatalysis" evidence="1">
    <location>
        <position position="197"/>
    </location>
</feature>
<protein>
    <recommendedName>
        <fullName evidence="1">Chaperone protein DnaK</fullName>
    </recommendedName>
    <alternativeName>
        <fullName evidence="1">HSP70</fullName>
    </alternativeName>
    <alternativeName>
        <fullName evidence="1">Heat shock 70 kDa protein</fullName>
    </alternativeName>
    <alternativeName>
        <fullName evidence="1">Heat shock protein 70</fullName>
    </alternativeName>
</protein>
<gene>
    <name evidence="1" type="primary">dnaK</name>
    <name type="ordered locus">JJD26997_1258</name>
</gene>
<dbReference type="EMBL" id="CP000768">
    <property type="protein sequence ID" value="ABS44458.1"/>
    <property type="molecule type" value="Genomic_DNA"/>
</dbReference>
<dbReference type="SMR" id="A7H484"/>
<dbReference type="KEGG" id="cjd:JJD26997_1258"/>
<dbReference type="HOGENOM" id="CLU_005965_2_1_7"/>
<dbReference type="Proteomes" id="UP000002302">
    <property type="component" value="Chromosome"/>
</dbReference>
<dbReference type="GO" id="GO:0005524">
    <property type="term" value="F:ATP binding"/>
    <property type="evidence" value="ECO:0007669"/>
    <property type="project" value="UniProtKB-UniRule"/>
</dbReference>
<dbReference type="GO" id="GO:0140662">
    <property type="term" value="F:ATP-dependent protein folding chaperone"/>
    <property type="evidence" value="ECO:0007669"/>
    <property type="project" value="InterPro"/>
</dbReference>
<dbReference type="GO" id="GO:0051082">
    <property type="term" value="F:unfolded protein binding"/>
    <property type="evidence" value="ECO:0007669"/>
    <property type="project" value="InterPro"/>
</dbReference>
<dbReference type="CDD" id="cd10234">
    <property type="entry name" value="ASKHA_NBD_HSP70_DnaK-like"/>
    <property type="match status" value="1"/>
</dbReference>
<dbReference type="FunFam" id="2.60.34.10:FF:000014">
    <property type="entry name" value="Chaperone protein DnaK HSP70"/>
    <property type="match status" value="1"/>
</dbReference>
<dbReference type="FunFam" id="1.20.1270.10:FF:000001">
    <property type="entry name" value="Molecular chaperone DnaK"/>
    <property type="match status" value="1"/>
</dbReference>
<dbReference type="FunFam" id="3.30.420.40:FF:000004">
    <property type="entry name" value="Molecular chaperone DnaK"/>
    <property type="match status" value="1"/>
</dbReference>
<dbReference type="FunFam" id="3.90.640.10:FF:000003">
    <property type="entry name" value="Molecular chaperone DnaK"/>
    <property type="match status" value="1"/>
</dbReference>
<dbReference type="Gene3D" id="1.20.1270.10">
    <property type="match status" value="1"/>
</dbReference>
<dbReference type="Gene3D" id="3.30.420.40">
    <property type="match status" value="2"/>
</dbReference>
<dbReference type="Gene3D" id="3.90.640.10">
    <property type="entry name" value="Actin, Chain A, domain 4"/>
    <property type="match status" value="1"/>
</dbReference>
<dbReference type="Gene3D" id="2.60.34.10">
    <property type="entry name" value="Substrate Binding Domain Of DNAk, Chain A, domain 1"/>
    <property type="match status" value="1"/>
</dbReference>
<dbReference type="HAMAP" id="MF_00332">
    <property type="entry name" value="DnaK"/>
    <property type="match status" value="1"/>
</dbReference>
<dbReference type="InterPro" id="IPR043129">
    <property type="entry name" value="ATPase_NBD"/>
</dbReference>
<dbReference type="InterPro" id="IPR012725">
    <property type="entry name" value="Chaperone_DnaK"/>
</dbReference>
<dbReference type="InterPro" id="IPR018181">
    <property type="entry name" value="Heat_shock_70_CS"/>
</dbReference>
<dbReference type="InterPro" id="IPR029048">
    <property type="entry name" value="HSP70_C_sf"/>
</dbReference>
<dbReference type="InterPro" id="IPR029047">
    <property type="entry name" value="HSP70_peptide-bd_sf"/>
</dbReference>
<dbReference type="InterPro" id="IPR013126">
    <property type="entry name" value="Hsp_70_fam"/>
</dbReference>
<dbReference type="NCBIfam" id="NF001413">
    <property type="entry name" value="PRK00290.1"/>
    <property type="match status" value="1"/>
</dbReference>
<dbReference type="NCBIfam" id="NF003520">
    <property type="entry name" value="PRK05183.1"/>
    <property type="match status" value="1"/>
</dbReference>
<dbReference type="NCBIfam" id="TIGR02350">
    <property type="entry name" value="prok_dnaK"/>
    <property type="match status" value="1"/>
</dbReference>
<dbReference type="PANTHER" id="PTHR19375">
    <property type="entry name" value="HEAT SHOCK PROTEIN 70KDA"/>
    <property type="match status" value="1"/>
</dbReference>
<dbReference type="Pfam" id="PF00012">
    <property type="entry name" value="HSP70"/>
    <property type="match status" value="1"/>
</dbReference>
<dbReference type="PRINTS" id="PR00301">
    <property type="entry name" value="HEATSHOCK70"/>
</dbReference>
<dbReference type="SUPFAM" id="SSF53067">
    <property type="entry name" value="Actin-like ATPase domain"/>
    <property type="match status" value="2"/>
</dbReference>
<dbReference type="SUPFAM" id="SSF100934">
    <property type="entry name" value="Heat shock protein 70kD (HSP70), C-terminal subdomain"/>
    <property type="match status" value="1"/>
</dbReference>
<dbReference type="SUPFAM" id="SSF100920">
    <property type="entry name" value="Heat shock protein 70kD (HSP70), peptide-binding domain"/>
    <property type="match status" value="1"/>
</dbReference>
<dbReference type="PROSITE" id="PS00297">
    <property type="entry name" value="HSP70_1"/>
    <property type="match status" value="1"/>
</dbReference>
<dbReference type="PROSITE" id="PS00329">
    <property type="entry name" value="HSP70_2"/>
    <property type="match status" value="1"/>
</dbReference>
<dbReference type="PROSITE" id="PS01036">
    <property type="entry name" value="HSP70_3"/>
    <property type="match status" value="1"/>
</dbReference>
<sequence length="623" mass="67478">MSKVIGIDLGTTNSCVAVYERGESKVIPNKEGKNTTPSVVAFTDKGEVLVGDSAKRQAVTNPEKTIYSIKRIMGLMINEDAAKEAKTRLPYHITERNGACAIEIAGKIYTPQEISAKVLMKLKEDAEAFLGESVVDAVITVPAYFNDAQRKATKEAGTIAGLNVLRIINEPTSAALAYGLDKKDSEKIVVYDLGGGTFDVTVLETGDNVVEVLATGGNAFLGGDDFDNKLIDFLANEFKDETGIDLKNDVMALQRLKEAAENAKKELSSANETEINLPFITADASGPKHLVKKLTRAKFEGMIDSLVAETITKINEVVSDAGLKKDEIKEVVMVGGSTRVPLVQEEVKKTFNKDLNKSVNPDEVVAIGAAIQGAVIKGDVKDVLLLDVTPLSLGIETLGGVMTKIIEKGTTIPTKKEQVFSTAEDNQSAVTINVLQGEREFSRDNKSLGNFNLEGIPPAPRGMPQIEVTFDIDANGILTVSAKDKATGKAQEIKITGSSGLSEEEINNMVKDAELHKEEDKKRKEAVDVRNAADSLAHQVEKSLSELGEKVATADKENIQKALDDLRETLKNQNASKEEIESKMKALSEVSHKLAENMYKKDEPNTANDKKKKDDDVIDAEVE</sequence>
<evidence type="ECO:0000255" key="1">
    <source>
        <dbReference type="HAMAP-Rule" id="MF_00332"/>
    </source>
</evidence>
<evidence type="ECO:0000256" key="2">
    <source>
        <dbReference type="SAM" id="MobiDB-lite"/>
    </source>
</evidence>
<keyword id="KW-0067">ATP-binding</keyword>
<keyword id="KW-0143">Chaperone</keyword>
<keyword id="KW-0547">Nucleotide-binding</keyword>
<keyword id="KW-0597">Phosphoprotein</keyword>
<keyword id="KW-0346">Stress response</keyword>
<comment type="function">
    <text evidence="1">Acts as a chaperone.</text>
</comment>
<comment type="induction">
    <text evidence="1">By stress conditions e.g. heat shock.</text>
</comment>
<comment type="similarity">
    <text evidence="1">Belongs to the heat shock protein 70 family.</text>
</comment>
<name>DNAK_CAMJD</name>
<accession>A7H484</accession>
<reference key="1">
    <citation type="submission" date="2007-07" db="EMBL/GenBank/DDBJ databases">
        <title>Complete genome sequence of Campylobacter jejuni subsp doylei 269.97 isolated from human blood.</title>
        <authorList>
            <person name="Fouts D.E."/>
            <person name="Mongodin E.F."/>
            <person name="Puiu D."/>
            <person name="Sebastian Y."/>
            <person name="Miller W.G."/>
            <person name="Mandrell R.E."/>
            <person name="Lastovica A.J."/>
            <person name="Nelson K.E."/>
        </authorList>
    </citation>
    <scope>NUCLEOTIDE SEQUENCE [LARGE SCALE GENOMIC DNA]</scope>
    <source>
        <strain>ATCC BAA-1458 / RM4099 / 269.97</strain>
    </source>
</reference>
<organism>
    <name type="scientific">Campylobacter jejuni subsp. doylei (strain ATCC BAA-1458 / RM4099 / 269.97)</name>
    <dbReference type="NCBI Taxonomy" id="360109"/>
    <lineage>
        <taxon>Bacteria</taxon>
        <taxon>Pseudomonadati</taxon>
        <taxon>Campylobacterota</taxon>
        <taxon>Epsilonproteobacteria</taxon>
        <taxon>Campylobacterales</taxon>
        <taxon>Campylobacteraceae</taxon>
        <taxon>Campylobacter</taxon>
    </lineage>
</organism>
<proteinExistence type="inferred from homology"/>